<comment type="function">
    <text evidence="2">Hormone involved in the regulation of erythrocyte proliferation and differentiation and the maintenance of a physiological level of circulating erythrocyte mass. Binds to EPOR leading to EPOR dimerization and JAK2 activation thereby activating specific downstream effectors, including STAT1 and STAT3.</text>
</comment>
<comment type="subcellular location">
    <subcellularLocation>
        <location>Secreted</location>
    </subcellularLocation>
</comment>
<comment type="tissue specificity">
    <text>Produced by kidney or liver of adult mammals and by liver of fetal or neonatal mammals.</text>
</comment>
<comment type="similarity">
    <text evidence="3">Belongs to the EPO/TPO family.</text>
</comment>
<reference key="1">
    <citation type="journal article" date="1993" name="Blood">
        <title>Erythropoietin structure-function relationships: high degree of sequence homology among mammals.</title>
        <authorList>
            <person name="Wen D."/>
            <person name="Boissel J.-P.R."/>
            <person name="Tracy T.E."/>
            <person name="Gruninger R.H."/>
            <person name="Mulcahy L.S."/>
            <person name="Czelusniak J."/>
            <person name="Goodman M."/>
            <person name="Bunn H.F."/>
        </authorList>
    </citation>
    <scope>NUCLEOTIDE SEQUENCE [MRNA]</scope>
    <source>
        <tissue>Kidney</tissue>
    </source>
</reference>
<sequence>MGVHECPAWLWLLLSLVSLPLGLPVPGAPPRLVCDSRVLERYLLEAKEAENVTMGCSESCSLNENITVPDTKVNFYAWKRIEVGQQAVEVWQGLALLSEAVLRGQAVLANSSQPFEPLQLHMDKAISGLRSITTLLRALGAQEAISLPDAASAAPLRTITADTFCKLFRVYSNFLRGKLKLYTGEACRRGDR</sequence>
<evidence type="ECO:0000250" key="1"/>
<evidence type="ECO:0000250" key="2">
    <source>
        <dbReference type="UniProtKB" id="P01588"/>
    </source>
</evidence>
<evidence type="ECO:0000305" key="3"/>
<keyword id="KW-1015">Disulfide bond</keyword>
<keyword id="KW-0265">Erythrocyte maturation</keyword>
<keyword id="KW-0325">Glycoprotein</keyword>
<keyword id="KW-0372">Hormone</keyword>
<keyword id="KW-1185">Reference proteome</keyword>
<keyword id="KW-0964">Secreted</keyword>
<keyword id="KW-0732">Signal</keyword>
<organism>
    <name type="scientific">Macaca mulatta</name>
    <name type="common">Rhesus macaque</name>
    <dbReference type="NCBI Taxonomy" id="9544"/>
    <lineage>
        <taxon>Eukaryota</taxon>
        <taxon>Metazoa</taxon>
        <taxon>Chordata</taxon>
        <taxon>Craniata</taxon>
        <taxon>Vertebrata</taxon>
        <taxon>Euteleostomi</taxon>
        <taxon>Mammalia</taxon>
        <taxon>Eutheria</taxon>
        <taxon>Euarchontoglires</taxon>
        <taxon>Primates</taxon>
        <taxon>Haplorrhini</taxon>
        <taxon>Catarrhini</taxon>
        <taxon>Cercopithecidae</taxon>
        <taxon>Cercopithecinae</taxon>
        <taxon>Macaca</taxon>
    </lineage>
</organism>
<gene>
    <name type="primary">EPO</name>
</gene>
<proteinExistence type="evidence at transcript level"/>
<name>EPO_MACMU</name>
<dbReference type="EMBL" id="L10609">
    <property type="protein sequence ID" value="AAA36842.1"/>
    <property type="molecule type" value="mRNA"/>
</dbReference>
<dbReference type="PIR" id="I84613">
    <property type="entry name" value="I84613"/>
</dbReference>
<dbReference type="RefSeq" id="NP_001036201.1">
    <property type="nucleotide sequence ID" value="NM_001042736.1"/>
</dbReference>
<dbReference type="SMR" id="Q28513"/>
<dbReference type="FunCoup" id="Q28513">
    <property type="interactions" value="807"/>
</dbReference>
<dbReference type="STRING" id="9544.ENSMMUP00000030108"/>
<dbReference type="GlyCosmos" id="Q28513">
    <property type="glycosylation" value="4 sites, No reported glycans"/>
</dbReference>
<dbReference type="PaxDb" id="9544-ENSMMUP00000030108"/>
<dbReference type="GeneID" id="719294"/>
<dbReference type="KEGG" id="mcc:719294"/>
<dbReference type="CTD" id="2056"/>
<dbReference type="eggNOG" id="ENOG502RXRC">
    <property type="taxonomic scope" value="Eukaryota"/>
</dbReference>
<dbReference type="InParanoid" id="Q28513"/>
<dbReference type="OrthoDB" id="9892121at2759"/>
<dbReference type="Proteomes" id="UP000006718">
    <property type="component" value="Unassembled WGS sequence"/>
</dbReference>
<dbReference type="GO" id="GO:0005615">
    <property type="term" value="C:extracellular space"/>
    <property type="evidence" value="ECO:0000318"/>
    <property type="project" value="GO_Central"/>
</dbReference>
<dbReference type="GO" id="GO:0005125">
    <property type="term" value="F:cytokine activity"/>
    <property type="evidence" value="ECO:0000318"/>
    <property type="project" value="GO_Central"/>
</dbReference>
<dbReference type="GO" id="GO:0005128">
    <property type="term" value="F:erythropoietin receptor binding"/>
    <property type="evidence" value="ECO:0000250"/>
    <property type="project" value="UniProtKB"/>
</dbReference>
<dbReference type="GO" id="GO:0005179">
    <property type="term" value="F:hormone activity"/>
    <property type="evidence" value="ECO:0007669"/>
    <property type="project" value="UniProtKB-KW"/>
</dbReference>
<dbReference type="GO" id="GO:0030295">
    <property type="term" value="F:protein kinase activator activity"/>
    <property type="evidence" value="ECO:0000318"/>
    <property type="project" value="GO_Central"/>
</dbReference>
<dbReference type="GO" id="GO:0030218">
    <property type="term" value="P:erythrocyte differentiation"/>
    <property type="evidence" value="ECO:0000250"/>
    <property type="project" value="UniProtKB"/>
</dbReference>
<dbReference type="GO" id="GO:0043249">
    <property type="term" value="P:erythrocyte maturation"/>
    <property type="evidence" value="ECO:0007669"/>
    <property type="project" value="UniProtKB-KW"/>
</dbReference>
<dbReference type="GO" id="GO:0038162">
    <property type="term" value="P:erythropoietin-mediated signaling pathway"/>
    <property type="evidence" value="ECO:0000250"/>
    <property type="project" value="UniProtKB"/>
</dbReference>
<dbReference type="GO" id="GO:0008284">
    <property type="term" value="P:positive regulation of cell population proliferation"/>
    <property type="evidence" value="ECO:0000318"/>
    <property type="project" value="GO_Central"/>
</dbReference>
<dbReference type="GO" id="GO:0046579">
    <property type="term" value="P:positive regulation of Ras protein signal transduction"/>
    <property type="evidence" value="ECO:0000318"/>
    <property type="project" value="GO_Central"/>
</dbReference>
<dbReference type="FunFam" id="1.20.1250.10:FF:000013">
    <property type="entry name" value="Erythropoietin"/>
    <property type="match status" value="1"/>
</dbReference>
<dbReference type="Gene3D" id="1.20.1250.10">
    <property type="match status" value="1"/>
</dbReference>
<dbReference type="InterPro" id="IPR009079">
    <property type="entry name" value="4_helix_cytokine-like_core"/>
</dbReference>
<dbReference type="InterPro" id="IPR019767">
    <property type="entry name" value="EPO/TPO_CS"/>
</dbReference>
<dbReference type="InterPro" id="IPR001323">
    <property type="entry name" value="EPO_TPO"/>
</dbReference>
<dbReference type="InterPro" id="IPR003013">
    <property type="entry name" value="Erythroptn"/>
</dbReference>
<dbReference type="PANTHER" id="PTHR10370">
    <property type="entry name" value="ERYTHROPOIETIN"/>
    <property type="match status" value="1"/>
</dbReference>
<dbReference type="PANTHER" id="PTHR10370:SF0">
    <property type="entry name" value="ERYTHROPOIETIN"/>
    <property type="match status" value="1"/>
</dbReference>
<dbReference type="Pfam" id="PF00758">
    <property type="entry name" value="EPO_TPO"/>
    <property type="match status" value="1"/>
</dbReference>
<dbReference type="PIRSF" id="PIRSF001951">
    <property type="entry name" value="EPO"/>
    <property type="match status" value="1"/>
</dbReference>
<dbReference type="PRINTS" id="PR00272">
    <property type="entry name" value="ERYTHROPTN"/>
</dbReference>
<dbReference type="SUPFAM" id="SSF47266">
    <property type="entry name" value="4-helical cytokines"/>
    <property type="match status" value="1"/>
</dbReference>
<dbReference type="PROSITE" id="PS00817">
    <property type="entry name" value="EPO_TPO"/>
    <property type="match status" value="1"/>
</dbReference>
<feature type="signal peptide" evidence="1">
    <location>
        <begin position="1"/>
        <end position="27"/>
    </location>
</feature>
<feature type="chain" id="PRO_0000008404" description="Erythropoietin">
    <location>
        <begin position="28"/>
        <end position="192"/>
    </location>
</feature>
<feature type="glycosylation site" description="N-linked (GlcNAc...) asparagine" evidence="1">
    <location>
        <position position="51"/>
    </location>
</feature>
<feature type="glycosylation site" description="N-linked (GlcNAc...) asparagine" evidence="1">
    <location>
        <position position="65"/>
    </location>
</feature>
<feature type="glycosylation site" description="N-linked (GlcNAc...) asparagine" evidence="1">
    <location>
        <position position="110"/>
    </location>
</feature>
<feature type="glycosylation site" description="O-linked (GalNAc...) serine" evidence="1">
    <location>
        <position position="152"/>
    </location>
</feature>
<feature type="disulfide bond" evidence="1">
    <location>
        <begin position="34"/>
        <end position="187"/>
    </location>
</feature>
<feature type="disulfide bond" evidence="1">
    <location>
        <begin position="56"/>
        <end position="60"/>
    </location>
</feature>
<accession>Q28513</accession>
<protein>
    <recommendedName>
        <fullName>Erythropoietin</fullName>
    </recommendedName>
</protein>